<sequence>MTYTVRTYGCQMNVHDSERIAGVLEDEGYVKSGSDDADVVVLNTCAVRENADNRFYGNLGQLLQKKNNGRIRQIAVGGCLAQKDRHKIFEKAPWVDVVFGTHNLGSLPALLRRSRHNKTAEIEIKDFLETFPSSLPVRRESNYSAWVSISVGCNNTCTFCIVPSLRGKERDRRPGDILAEISALVSEGVLEVTLLGQNVNTYGVEFGDRSAFASLLRKAGAIEGLERLKFTSPHPAAFTSDVIDAMHDTQAVLPQLHMPLQSGSDRILRAMRRSYRAGKFLKIISEARNKIPNIAITTDIIVGFPGETEEDFQDTLNLVAEVRFASAFTFQYSPRPGTPAASMPNQIPGDIVQERYERLLDLQNRIALEENRKLIGKEVELLVTVGGRKDSMLDNRYTGRTPCGRLVHFSCLHQLRPGDFATVKIIYAAPYHLIGDNALTVRRTPAGDVWIQKNDTRSAQLVSLGMPRIR</sequence>
<gene>
    <name evidence="1" type="primary">miaB</name>
    <name type="ordered locus">TWT_610</name>
</gene>
<keyword id="KW-0004">4Fe-4S</keyword>
<keyword id="KW-0963">Cytoplasm</keyword>
<keyword id="KW-0408">Iron</keyword>
<keyword id="KW-0411">Iron-sulfur</keyword>
<keyword id="KW-0479">Metal-binding</keyword>
<keyword id="KW-1185">Reference proteome</keyword>
<keyword id="KW-0949">S-adenosyl-L-methionine</keyword>
<keyword id="KW-0808">Transferase</keyword>
<keyword id="KW-0819">tRNA processing</keyword>
<comment type="function">
    <text evidence="1">Catalyzes the methylthiolation of N6-(dimethylallyl)adenosine (i(6)A), leading to the formation of 2-methylthio-N6-(dimethylallyl)adenosine (ms(2)i(6)A) at position 37 in tRNAs that read codons beginning with uridine.</text>
</comment>
<comment type="catalytic activity">
    <reaction evidence="1">
        <text>N(6)-dimethylallyladenosine(37) in tRNA + (sulfur carrier)-SH + AH2 + 2 S-adenosyl-L-methionine = 2-methylsulfanyl-N(6)-dimethylallyladenosine(37) in tRNA + (sulfur carrier)-H + 5'-deoxyadenosine + L-methionine + A + S-adenosyl-L-homocysteine + 2 H(+)</text>
        <dbReference type="Rhea" id="RHEA:37067"/>
        <dbReference type="Rhea" id="RHEA-COMP:10375"/>
        <dbReference type="Rhea" id="RHEA-COMP:10376"/>
        <dbReference type="Rhea" id="RHEA-COMP:14737"/>
        <dbReference type="Rhea" id="RHEA-COMP:14739"/>
        <dbReference type="ChEBI" id="CHEBI:13193"/>
        <dbReference type="ChEBI" id="CHEBI:15378"/>
        <dbReference type="ChEBI" id="CHEBI:17319"/>
        <dbReference type="ChEBI" id="CHEBI:17499"/>
        <dbReference type="ChEBI" id="CHEBI:29917"/>
        <dbReference type="ChEBI" id="CHEBI:57844"/>
        <dbReference type="ChEBI" id="CHEBI:57856"/>
        <dbReference type="ChEBI" id="CHEBI:59789"/>
        <dbReference type="ChEBI" id="CHEBI:64428"/>
        <dbReference type="ChEBI" id="CHEBI:74415"/>
        <dbReference type="ChEBI" id="CHEBI:74417"/>
        <dbReference type="EC" id="2.8.4.3"/>
    </reaction>
</comment>
<comment type="cofactor">
    <cofactor evidence="1">
        <name>[4Fe-4S] cluster</name>
        <dbReference type="ChEBI" id="CHEBI:49883"/>
    </cofactor>
    <text evidence="1">Binds 2 [4Fe-4S] clusters. One cluster is coordinated with 3 cysteines and an exchangeable S-adenosyl-L-methionine.</text>
</comment>
<comment type="subunit">
    <text evidence="1">Monomer.</text>
</comment>
<comment type="subcellular location">
    <subcellularLocation>
        <location evidence="1">Cytoplasm</location>
    </subcellularLocation>
</comment>
<comment type="similarity">
    <text evidence="1">Belongs to the methylthiotransferase family. MiaB subfamily.</text>
</comment>
<evidence type="ECO:0000255" key="1">
    <source>
        <dbReference type="HAMAP-Rule" id="MF_01864"/>
    </source>
</evidence>
<evidence type="ECO:0000255" key="2">
    <source>
        <dbReference type="PROSITE-ProRule" id="PRU01266"/>
    </source>
</evidence>
<dbReference type="EC" id="2.8.4.3" evidence="1"/>
<dbReference type="EMBL" id="AE014184">
    <property type="protein sequence ID" value="AAO44707.1"/>
    <property type="molecule type" value="Genomic_DNA"/>
</dbReference>
<dbReference type="SMR" id="Q83FT9"/>
<dbReference type="STRING" id="203267.TWT_610"/>
<dbReference type="KEGG" id="twh:TWT_610"/>
<dbReference type="eggNOG" id="COG0621">
    <property type="taxonomic scope" value="Bacteria"/>
</dbReference>
<dbReference type="HOGENOM" id="CLU_018697_2_2_11"/>
<dbReference type="OrthoDB" id="9805215at2"/>
<dbReference type="Proteomes" id="UP000002200">
    <property type="component" value="Chromosome"/>
</dbReference>
<dbReference type="GO" id="GO:0005829">
    <property type="term" value="C:cytosol"/>
    <property type="evidence" value="ECO:0007669"/>
    <property type="project" value="TreeGrafter"/>
</dbReference>
<dbReference type="GO" id="GO:0051539">
    <property type="term" value="F:4 iron, 4 sulfur cluster binding"/>
    <property type="evidence" value="ECO:0007669"/>
    <property type="project" value="UniProtKB-UniRule"/>
</dbReference>
<dbReference type="GO" id="GO:0046872">
    <property type="term" value="F:metal ion binding"/>
    <property type="evidence" value="ECO:0007669"/>
    <property type="project" value="UniProtKB-KW"/>
</dbReference>
<dbReference type="GO" id="GO:0035597">
    <property type="term" value="F:N6-isopentenyladenosine methylthiotransferase activity"/>
    <property type="evidence" value="ECO:0007669"/>
    <property type="project" value="TreeGrafter"/>
</dbReference>
<dbReference type="CDD" id="cd01335">
    <property type="entry name" value="Radical_SAM"/>
    <property type="match status" value="1"/>
</dbReference>
<dbReference type="FunFam" id="3.40.50.12160:FF:000003">
    <property type="entry name" value="CDK5 regulatory subunit-associated protein 1"/>
    <property type="match status" value="1"/>
</dbReference>
<dbReference type="FunFam" id="3.80.30.20:FF:000001">
    <property type="entry name" value="tRNA-2-methylthio-N(6)-dimethylallyladenosine synthase 2"/>
    <property type="match status" value="1"/>
</dbReference>
<dbReference type="Gene3D" id="3.40.50.12160">
    <property type="entry name" value="Methylthiotransferase, N-terminal domain"/>
    <property type="match status" value="1"/>
</dbReference>
<dbReference type="Gene3D" id="3.80.30.20">
    <property type="entry name" value="tm_1862 like domain"/>
    <property type="match status" value="1"/>
</dbReference>
<dbReference type="HAMAP" id="MF_01864">
    <property type="entry name" value="tRNA_metthiotr_MiaB"/>
    <property type="match status" value="1"/>
</dbReference>
<dbReference type="InterPro" id="IPR006638">
    <property type="entry name" value="Elp3/MiaA/NifB-like_rSAM"/>
</dbReference>
<dbReference type="InterPro" id="IPR005839">
    <property type="entry name" value="Methylthiotransferase"/>
</dbReference>
<dbReference type="InterPro" id="IPR020612">
    <property type="entry name" value="Methylthiotransferase_CS"/>
</dbReference>
<dbReference type="InterPro" id="IPR013848">
    <property type="entry name" value="Methylthiotransferase_N"/>
</dbReference>
<dbReference type="InterPro" id="IPR038135">
    <property type="entry name" value="Methylthiotransferase_N_sf"/>
</dbReference>
<dbReference type="InterPro" id="IPR006463">
    <property type="entry name" value="MiaB_methiolase"/>
</dbReference>
<dbReference type="InterPro" id="IPR007197">
    <property type="entry name" value="rSAM"/>
</dbReference>
<dbReference type="InterPro" id="IPR023404">
    <property type="entry name" value="rSAM_horseshoe"/>
</dbReference>
<dbReference type="InterPro" id="IPR002792">
    <property type="entry name" value="TRAM_dom"/>
</dbReference>
<dbReference type="NCBIfam" id="TIGR01574">
    <property type="entry name" value="miaB-methiolase"/>
    <property type="match status" value="1"/>
</dbReference>
<dbReference type="NCBIfam" id="TIGR00089">
    <property type="entry name" value="MiaB/RimO family radical SAM methylthiotransferase"/>
    <property type="match status" value="1"/>
</dbReference>
<dbReference type="PANTHER" id="PTHR43020">
    <property type="entry name" value="CDK5 REGULATORY SUBUNIT-ASSOCIATED PROTEIN 1"/>
    <property type="match status" value="1"/>
</dbReference>
<dbReference type="PANTHER" id="PTHR43020:SF2">
    <property type="entry name" value="MITOCHONDRIAL TRNA METHYLTHIOTRANSFERASE CDK5RAP1"/>
    <property type="match status" value="1"/>
</dbReference>
<dbReference type="Pfam" id="PF04055">
    <property type="entry name" value="Radical_SAM"/>
    <property type="match status" value="1"/>
</dbReference>
<dbReference type="Pfam" id="PF00919">
    <property type="entry name" value="UPF0004"/>
    <property type="match status" value="1"/>
</dbReference>
<dbReference type="SFLD" id="SFLDF00273">
    <property type="entry name" value="(dimethylallyl)adenosine_tRNA"/>
    <property type="match status" value="1"/>
</dbReference>
<dbReference type="SFLD" id="SFLDG01082">
    <property type="entry name" value="B12-binding_domain_containing"/>
    <property type="match status" value="1"/>
</dbReference>
<dbReference type="SFLD" id="SFLDG01061">
    <property type="entry name" value="methylthiotransferase"/>
    <property type="match status" value="1"/>
</dbReference>
<dbReference type="SMART" id="SM00729">
    <property type="entry name" value="Elp3"/>
    <property type="match status" value="1"/>
</dbReference>
<dbReference type="SUPFAM" id="SSF102114">
    <property type="entry name" value="Radical SAM enzymes"/>
    <property type="match status" value="1"/>
</dbReference>
<dbReference type="PROSITE" id="PS51449">
    <property type="entry name" value="MTTASE_N"/>
    <property type="match status" value="1"/>
</dbReference>
<dbReference type="PROSITE" id="PS01278">
    <property type="entry name" value="MTTASE_RADICAL"/>
    <property type="match status" value="1"/>
</dbReference>
<dbReference type="PROSITE" id="PS51918">
    <property type="entry name" value="RADICAL_SAM"/>
    <property type="match status" value="1"/>
</dbReference>
<dbReference type="PROSITE" id="PS50926">
    <property type="entry name" value="TRAM"/>
    <property type="match status" value="1"/>
</dbReference>
<protein>
    <recommendedName>
        <fullName evidence="1">tRNA-2-methylthio-N(6)-dimethylallyladenosine synthase</fullName>
        <ecNumber evidence="1">2.8.4.3</ecNumber>
    </recommendedName>
    <alternativeName>
        <fullName evidence="1">(Dimethylallyl)adenosine tRNA methylthiotransferase MiaB</fullName>
    </alternativeName>
    <alternativeName>
        <fullName evidence="1">tRNA-i(6)A37 methylthiotransferase</fullName>
    </alternativeName>
</protein>
<name>MIAB_TROWT</name>
<accession>Q83FT9</accession>
<reference key="1">
    <citation type="journal article" date="2003" name="Genome Res.">
        <title>Tropheryma whipplei twist: a human pathogenic Actinobacteria with a reduced genome.</title>
        <authorList>
            <person name="Raoult D."/>
            <person name="Ogata H."/>
            <person name="Audic S."/>
            <person name="Robert C."/>
            <person name="Suhre K."/>
            <person name="Drancourt M."/>
            <person name="Claverie J.-M."/>
        </authorList>
    </citation>
    <scope>NUCLEOTIDE SEQUENCE [LARGE SCALE GENOMIC DNA]</scope>
    <source>
        <strain>Twist</strain>
    </source>
</reference>
<feature type="chain" id="PRO_0000374625" description="tRNA-2-methylthio-N(6)-dimethylallyladenosine synthase">
    <location>
        <begin position="1"/>
        <end position="470"/>
    </location>
</feature>
<feature type="domain" description="MTTase N-terminal" evidence="1">
    <location>
        <begin position="1"/>
        <end position="116"/>
    </location>
</feature>
<feature type="domain" description="Radical SAM core" evidence="2">
    <location>
        <begin position="139"/>
        <end position="369"/>
    </location>
</feature>
<feature type="domain" description="TRAM" evidence="1">
    <location>
        <begin position="372"/>
        <end position="439"/>
    </location>
</feature>
<feature type="binding site" evidence="1">
    <location>
        <position position="10"/>
    </location>
    <ligand>
        <name>[4Fe-4S] cluster</name>
        <dbReference type="ChEBI" id="CHEBI:49883"/>
        <label>1</label>
    </ligand>
</feature>
<feature type="binding site" evidence="1">
    <location>
        <position position="45"/>
    </location>
    <ligand>
        <name>[4Fe-4S] cluster</name>
        <dbReference type="ChEBI" id="CHEBI:49883"/>
        <label>1</label>
    </ligand>
</feature>
<feature type="binding site" evidence="1">
    <location>
        <position position="79"/>
    </location>
    <ligand>
        <name>[4Fe-4S] cluster</name>
        <dbReference type="ChEBI" id="CHEBI:49883"/>
        <label>1</label>
    </ligand>
</feature>
<feature type="binding site" evidence="1">
    <location>
        <position position="153"/>
    </location>
    <ligand>
        <name>[4Fe-4S] cluster</name>
        <dbReference type="ChEBI" id="CHEBI:49883"/>
        <label>2</label>
        <note>4Fe-4S-S-AdoMet</note>
    </ligand>
</feature>
<feature type="binding site" evidence="1">
    <location>
        <position position="157"/>
    </location>
    <ligand>
        <name>[4Fe-4S] cluster</name>
        <dbReference type="ChEBI" id="CHEBI:49883"/>
        <label>2</label>
        <note>4Fe-4S-S-AdoMet</note>
    </ligand>
</feature>
<feature type="binding site" evidence="1">
    <location>
        <position position="160"/>
    </location>
    <ligand>
        <name>[4Fe-4S] cluster</name>
        <dbReference type="ChEBI" id="CHEBI:49883"/>
        <label>2</label>
        <note>4Fe-4S-S-AdoMet</note>
    </ligand>
</feature>
<organism>
    <name type="scientific">Tropheryma whipplei (strain Twist)</name>
    <name type="common">Whipple's bacillus</name>
    <dbReference type="NCBI Taxonomy" id="203267"/>
    <lineage>
        <taxon>Bacteria</taxon>
        <taxon>Bacillati</taxon>
        <taxon>Actinomycetota</taxon>
        <taxon>Actinomycetes</taxon>
        <taxon>Micrococcales</taxon>
        <taxon>Tropherymataceae</taxon>
        <taxon>Tropheryma</taxon>
    </lineage>
</organism>
<proteinExistence type="inferred from homology"/>